<organism>
    <name type="scientific">Drosophila yakuba</name>
    <name type="common">Fruit fly</name>
    <dbReference type="NCBI Taxonomy" id="7245"/>
    <lineage>
        <taxon>Eukaryota</taxon>
        <taxon>Metazoa</taxon>
        <taxon>Ecdysozoa</taxon>
        <taxon>Arthropoda</taxon>
        <taxon>Hexapoda</taxon>
        <taxon>Insecta</taxon>
        <taxon>Pterygota</taxon>
        <taxon>Neoptera</taxon>
        <taxon>Endopterygota</taxon>
        <taxon>Diptera</taxon>
        <taxon>Brachycera</taxon>
        <taxon>Muscomorpha</taxon>
        <taxon>Ephydroidea</taxon>
        <taxon>Drosophilidae</taxon>
        <taxon>Drosophila</taxon>
        <taxon>Sophophora</taxon>
    </lineage>
</organism>
<proteinExistence type="inferred from homology"/>
<reference key="1">
    <citation type="journal article" date="2007" name="Nature">
        <title>Evolution of genes and genomes on the Drosophila phylogeny.</title>
        <authorList>
            <consortium name="Drosophila 12 genomes consortium"/>
        </authorList>
    </citation>
    <scope>NUCLEOTIDE SEQUENCE [LARGE SCALE GENOMIC DNA]</scope>
    <source>
        <strain>Tai18E2 / Tucson 14021-0261.01</strain>
    </source>
</reference>
<accession>B4PNN4</accession>
<sequence>MSNYAPFIKPYVEYNEHGWGPCEVPELDVPYQPFCKGDRLGKICDWTVSLPEKKFPSKYASTFGNSSQYAYFYEDDDSTFHLVDTTGSKAFKPYQRGRYRPNVRNNVRARGRTGRGNATLGGLGGPVAGGSTANSTKYGKGRNTRNAQNMGRRFGRNAPTRLRESSVMVQSDWVSIEEIDFPRLLKLALPNIKEGKDIATCGSLEYYDKLYDRVNLRNEKPLLKMDRVVHTVTTTDDPVIRRLSKTMGNVFATDEILATIMCCTRSNYSWDVVIEKLGTKVFLDKRDNDQFDLLTVNETSLEPPMDEEGSINSAHSLAMEATLINHNFSQQVLRIGDQEPRFKFEEPNPFEEQGVDLASMGYRYRQWDLGNEVVLIARCKHNGVVQGPNGDMQFLSIKALNEWDSKVTNSVEWRQKLDTQRGAVLASELRNNACKLARWTVEAVLAGSDQLKLGYVSRVNPRDHLRHVILGTQQFKPQEFATQINLNMDNAWGVLRCLIDIVMKQPDGKYLIMKDPNKSMIRLYDIPENAFDSDGDDESESSEPFGNSIDN</sequence>
<protein>
    <recommendedName>
        <fullName evidence="2">Eukaryotic translation initiation factor 3 subunit D-2</fullName>
        <shortName evidence="2">eIF3d-2</shortName>
    </recommendedName>
    <alternativeName>
        <fullName evidence="2">Eukaryotic translation initiation factor 3 subunit 7-2</fullName>
    </alternativeName>
</protein>
<evidence type="ECO:0000250" key="1">
    <source>
        <dbReference type="UniProtKB" id="K7IM66"/>
    </source>
</evidence>
<evidence type="ECO:0000255" key="2">
    <source>
        <dbReference type="HAMAP-Rule" id="MF_03003"/>
    </source>
</evidence>
<evidence type="ECO:0000256" key="3">
    <source>
        <dbReference type="SAM" id="MobiDB-lite"/>
    </source>
</evidence>
<gene>
    <name evidence="2" type="primary">eIF3d2</name>
    <name evidence="2" type="synonym">eIF3-S7-2</name>
    <name type="ORF">GE24545</name>
</gene>
<feature type="chain" id="PRO_0000364165" description="Eukaryotic translation initiation factor 3 subunit D-2">
    <location>
        <begin position="1"/>
        <end position="551"/>
    </location>
</feature>
<feature type="region of interest" description="Disordered" evidence="3">
    <location>
        <begin position="108"/>
        <end position="152"/>
    </location>
</feature>
<feature type="region of interest" description="RNA gate" evidence="1">
    <location>
        <begin position="290"/>
        <end position="304"/>
    </location>
</feature>
<feature type="region of interest" description="Disordered" evidence="3">
    <location>
        <begin position="530"/>
        <end position="551"/>
    </location>
</feature>
<feature type="compositionally biased region" description="Gly residues" evidence="3">
    <location>
        <begin position="119"/>
        <end position="128"/>
    </location>
</feature>
<feature type="compositionally biased region" description="Acidic residues" evidence="3">
    <location>
        <begin position="531"/>
        <end position="541"/>
    </location>
</feature>
<keyword id="KW-0963">Cytoplasm</keyword>
<keyword id="KW-0396">Initiation factor</keyword>
<keyword id="KW-0648">Protein biosynthesis</keyword>
<keyword id="KW-0694">RNA-binding</keyword>
<name>EI3D2_DROYA</name>
<comment type="function">
    <text evidence="2">mRNA cap-binding component of the eukaryotic translation initiation factor 3 (eIF-3) complex, which is involved in protein synthesis of a specialized repertoire of mRNAs and, together with other initiation factors, stimulates binding of mRNA and methionyl-tRNAi to the 40S ribosome. The eIF-3 complex specifically targets and initiates translation of a subset of mRNAs involved in cell proliferation. In the eIF-3 complex, eif3d specifically recognizes and binds the 7-methylguanosine cap of a subset of mRNAs.</text>
</comment>
<comment type="subunit">
    <text evidence="2">Component of the eukaryotic translation initiation factor 3 (eIF-3) complex. The eIF-3 complex interacts with pix.</text>
</comment>
<comment type="subcellular location">
    <subcellularLocation>
        <location evidence="2">Cytoplasm</location>
    </subcellularLocation>
</comment>
<comment type="domain">
    <text evidence="2">The RNA gate region regulates mRNA cap recognition to prevent promiscuous mRNA-binding before assembly of eif3d into the full eukaryotic translation initiation factor 3 (eIF-3) complex.</text>
</comment>
<comment type="similarity">
    <text evidence="2">Belongs to the eIF-3 subunit D family.</text>
</comment>
<dbReference type="EMBL" id="CM000160">
    <property type="protein sequence ID" value="EDW97049.1"/>
    <property type="molecule type" value="Genomic_DNA"/>
</dbReference>
<dbReference type="SMR" id="B4PNN4"/>
<dbReference type="EnsemblMetazoa" id="FBtr0271063">
    <property type="protein sequence ID" value="FBpp0269555"/>
    <property type="gene ID" value="FBgn0241657"/>
</dbReference>
<dbReference type="EnsemblMetazoa" id="XM_002097301.4">
    <property type="protein sequence ID" value="XP_002097337.1"/>
    <property type="gene ID" value="LOC6536765"/>
</dbReference>
<dbReference type="GeneID" id="6536765"/>
<dbReference type="KEGG" id="dya:Dyak_GE24545"/>
<dbReference type="CTD" id="41475"/>
<dbReference type="eggNOG" id="KOG2479">
    <property type="taxonomic scope" value="Eukaryota"/>
</dbReference>
<dbReference type="HOGENOM" id="CLU_024521_2_0_1"/>
<dbReference type="OMA" id="CKHNGVI"/>
<dbReference type="OrthoDB" id="16538at2759"/>
<dbReference type="PhylomeDB" id="B4PNN4"/>
<dbReference type="Proteomes" id="UP000002282">
    <property type="component" value="Chromosome 3R"/>
</dbReference>
<dbReference type="GO" id="GO:0016282">
    <property type="term" value="C:eukaryotic 43S preinitiation complex"/>
    <property type="evidence" value="ECO:0007669"/>
    <property type="project" value="UniProtKB-UniRule"/>
</dbReference>
<dbReference type="GO" id="GO:0033290">
    <property type="term" value="C:eukaryotic 48S preinitiation complex"/>
    <property type="evidence" value="ECO:0007669"/>
    <property type="project" value="UniProtKB-UniRule"/>
</dbReference>
<dbReference type="GO" id="GO:0005852">
    <property type="term" value="C:eukaryotic translation initiation factor 3 complex"/>
    <property type="evidence" value="ECO:0000250"/>
    <property type="project" value="UniProtKB"/>
</dbReference>
<dbReference type="GO" id="GO:0098808">
    <property type="term" value="F:mRNA cap binding"/>
    <property type="evidence" value="ECO:0007669"/>
    <property type="project" value="UniProtKB-UniRule"/>
</dbReference>
<dbReference type="GO" id="GO:0003743">
    <property type="term" value="F:translation initiation factor activity"/>
    <property type="evidence" value="ECO:0000250"/>
    <property type="project" value="UniProtKB"/>
</dbReference>
<dbReference type="GO" id="GO:0002191">
    <property type="term" value="P:cap-dependent translational initiation"/>
    <property type="evidence" value="ECO:0007669"/>
    <property type="project" value="UniProtKB-UniRule"/>
</dbReference>
<dbReference type="GO" id="GO:0001732">
    <property type="term" value="P:formation of cytoplasmic translation initiation complex"/>
    <property type="evidence" value="ECO:0007669"/>
    <property type="project" value="UniProtKB-UniRule"/>
</dbReference>
<dbReference type="GO" id="GO:0006446">
    <property type="term" value="P:regulation of translational initiation"/>
    <property type="evidence" value="ECO:0000250"/>
    <property type="project" value="UniProtKB"/>
</dbReference>
<dbReference type="HAMAP" id="MF_03003">
    <property type="entry name" value="eIF3d"/>
    <property type="match status" value="1"/>
</dbReference>
<dbReference type="InterPro" id="IPR007783">
    <property type="entry name" value="eIF3d"/>
</dbReference>
<dbReference type="PANTHER" id="PTHR12399">
    <property type="entry name" value="EUKARYOTIC TRANSLATION INITIATION FACTOR 3 SUBUNIT 7"/>
    <property type="match status" value="1"/>
</dbReference>
<dbReference type="PANTHER" id="PTHR12399:SF0">
    <property type="entry name" value="EUKARYOTIC TRANSLATION INITIATION FACTOR 3 SUBUNIT D"/>
    <property type="match status" value="1"/>
</dbReference>
<dbReference type="Pfam" id="PF05091">
    <property type="entry name" value="eIF-3_zeta"/>
    <property type="match status" value="1"/>
</dbReference>
<dbReference type="PIRSF" id="PIRSF016281">
    <property type="entry name" value="EIF-3_zeta"/>
    <property type="match status" value="1"/>
</dbReference>